<protein>
    <recommendedName>
        <fullName>Endothelial differentiation-related factor 1 homolog</fullName>
        <shortName>EDF-1</shortName>
    </recommendedName>
</protein>
<gene>
    <name type="primary">edf1</name>
</gene>
<evidence type="ECO:0000250" key="1"/>
<evidence type="ECO:0000255" key="2">
    <source>
        <dbReference type="PROSITE-ProRule" id="PRU00257"/>
    </source>
</evidence>
<evidence type="ECO:0000256" key="3">
    <source>
        <dbReference type="SAM" id="MobiDB-lite"/>
    </source>
</evidence>
<keyword id="KW-0010">Activator</keyword>
<keyword id="KW-0238">DNA-binding</keyword>
<keyword id="KW-0539">Nucleus</keyword>
<keyword id="KW-1185">Reference proteome</keyword>
<keyword id="KW-0804">Transcription</keyword>
<keyword id="KW-0805">Transcription regulation</keyword>
<feature type="chain" id="PRO_0000149800" description="Endothelial differentiation-related factor 1 homolog">
    <location>
        <begin position="1"/>
        <end position="147"/>
    </location>
</feature>
<feature type="domain" description="HTH cro/C1-type" evidence="2">
    <location>
        <begin position="81"/>
        <end position="135"/>
    </location>
</feature>
<feature type="DNA-binding region" description="H-T-H motif" evidence="2">
    <location>
        <begin position="92"/>
        <end position="111"/>
    </location>
</feature>
<feature type="region of interest" description="Disordered" evidence="3">
    <location>
        <begin position="1"/>
        <end position="69"/>
    </location>
</feature>
<feature type="compositionally biased region" description="Basic and acidic residues" evidence="3">
    <location>
        <begin position="33"/>
        <end position="42"/>
    </location>
</feature>
<feature type="compositionally biased region" description="Polar residues" evidence="3">
    <location>
        <begin position="46"/>
        <end position="58"/>
    </location>
</feature>
<feature type="compositionally biased region" description="Basic and acidic residues" evidence="3">
    <location>
        <begin position="59"/>
        <end position="69"/>
    </location>
</feature>
<proteinExistence type="evidence at transcript level"/>
<comment type="function">
    <text evidence="1">Probable transcriptional coactivator.</text>
</comment>
<comment type="subcellular location">
    <subcellularLocation>
        <location evidence="1">Nucleus</location>
    </subcellularLocation>
</comment>
<organism>
    <name type="scientific">Xenopus laevis</name>
    <name type="common">African clawed frog</name>
    <dbReference type="NCBI Taxonomy" id="8355"/>
    <lineage>
        <taxon>Eukaryota</taxon>
        <taxon>Metazoa</taxon>
        <taxon>Chordata</taxon>
        <taxon>Craniata</taxon>
        <taxon>Vertebrata</taxon>
        <taxon>Euteleostomi</taxon>
        <taxon>Amphibia</taxon>
        <taxon>Batrachia</taxon>
        <taxon>Anura</taxon>
        <taxon>Pipoidea</taxon>
        <taxon>Pipidae</taxon>
        <taxon>Xenopodinae</taxon>
        <taxon>Xenopus</taxon>
        <taxon>Xenopus</taxon>
    </lineage>
</organism>
<reference key="1">
    <citation type="submission" date="2004-06" db="EMBL/GenBank/DDBJ databases">
        <authorList>
            <consortium name="NIH - Xenopus Gene Collection (XGC) project"/>
        </authorList>
    </citation>
    <scope>NUCLEOTIDE SEQUENCE [LARGE SCALE MRNA]</scope>
    <source>
        <tissue>Ovary</tissue>
    </source>
</reference>
<sequence length="147" mass="16321">MAESDWDTVTVLRKKGPTAAQAKSKQAITAAQRRGEEVETSKKWSAGQNKQHTITRNTAKLDRETEELHHDRVPLEVGKVIQQGRQGKGMTQKDLATKINEKPQVIADYECGKAIPNNQVMGKIERVIGLKLRGKDIGKPMDPGPKK</sequence>
<name>EDF1_XENLA</name>
<dbReference type="EMBL" id="BC073056">
    <property type="protein sequence ID" value="AAH73056.1"/>
    <property type="molecule type" value="mRNA"/>
</dbReference>
<dbReference type="RefSeq" id="NP_001085634.1">
    <property type="nucleotide sequence ID" value="NM_001092165.1"/>
</dbReference>
<dbReference type="SMR" id="Q6GPQ6"/>
<dbReference type="DNASU" id="444060"/>
<dbReference type="GeneID" id="444060"/>
<dbReference type="KEGG" id="xla:444060"/>
<dbReference type="AGR" id="Xenbase:XB-GENE-17343925"/>
<dbReference type="CTD" id="444060"/>
<dbReference type="Xenbase" id="XB-GENE-17343925">
    <property type="gene designation" value="edf1.L"/>
</dbReference>
<dbReference type="OMA" id="KAVPNQM"/>
<dbReference type="OrthoDB" id="10253401at2759"/>
<dbReference type="Proteomes" id="UP000186698">
    <property type="component" value="Chromosome 8L"/>
</dbReference>
<dbReference type="Bgee" id="444060">
    <property type="expression patterns" value="Expressed in pancreas and 19 other cell types or tissues"/>
</dbReference>
<dbReference type="GO" id="GO:0005634">
    <property type="term" value="C:nucleus"/>
    <property type="evidence" value="ECO:0000318"/>
    <property type="project" value="GO_Central"/>
</dbReference>
<dbReference type="GO" id="GO:0003677">
    <property type="term" value="F:DNA binding"/>
    <property type="evidence" value="ECO:0007669"/>
    <property type="project" value="UniProtKB-KW"/>
</dbReference>
<dbReference type="CDD" id="cd00093">
    <property type="entry name" value="HTH_XRE"/>
    <property type="match status" value="1"/>
</dbReference>
<dbReference type="FunFam" id="1.10.260.40:FF:000015">
    <property type="entry name" value="Endothelial differentiation-related factor 1"/>
    <property type="match status" value="1"/>
</dbReference>
<dbReference type="Gene3D" id="1.10.260.40">
    <property type="entry name" value="lambda repressor-like DNA-binding domains"/>
    <property type="match status" value="1"/>
</dbReference>
<dbReference type="InterPro" id="IPR001387">
    <property type="entry name" value="Cro/C1-type_HTH"/>
</dbReference>
<dbReference type="InterPro" id="IPR010982">
    <property type="entry name" value="Lambda_DNA-bd_dom_sf"/>
</dbReference>
<dbReference type="InterPro" id="IPR013729">
    <property type="entry name" value="MBF1_N"/>
</dbReference>
<dbReference type="PANTHER" id="PTHR10245:SF15">
    <property type="entry name" value="ENDOTHELIAL DIFFERENTIATION-RELATED FACTOR 1"/>
    <property type="match status" value="1"/>
</dbReference>
<dbReference type="PANTHER" id="PTHR10245">
    <property type="entry name" value="ENDOTHELIAL DIFFERENTIATION-RELATED FACTOR 1 MULTIPROTEIN BRIDGING FACTOR 1"/>
    <property type="match status" value="1"/>
</dbReference>
<dbReference type="Pfam" id="PF01381">
    <property type="entry name" value="HTH_3"/>
    <property type="match status" value="1"/>
</dbReference>
<dbReference type="Pfam" id="PF08523">
    <property type="entry name" value="MBF1"/>
    <property type="match status" value="1"/>
</dbReference>
<dbReference type="SMART" id="SM00530">
    <property type="entry name" value="HTH_XRE"/>
    <property type="match status" value="1"/>
</dbReference>
<dbReference type="SUPFAM" id="SSF47413">
    <property type="entry name" value="lambda repressor-like DNA-binding domains"/>
    <property type="match status" value="1"/>
</dbReference>
<dbReference type="PROSITE" id="PS50943">
    <property type="entry name" value="HTH_CROC1"/>
    <property type="match status" value="1"/>
</dbReference>
<accession>Q6GPQ6</accession>